<name>TORD_VIBA3</name>
<gene>
    <name evidence="1" type="primary">torD</name>
    <name type="ordered locus">VS_1089</name>
</gene>
<proteinExistence type="inferred from homology"/>
<dbReference type="EMBL" id="FM954972">
    <property type="protein sequence ID" value="CAV18204.1"/>
    <property type="molecule type" value="Genomic_DNA"/>
</dbReference>
<dbReference type="SMR" id="B7VMG5"/>
<dbReference type="STRING" id="575788.VS_1089"/>
<dbReference type="KEGG" id="vsp:VS_1089"/>
<dbReference type="eggNOG" id="COG3381">
    <property type="taxonomic scope" value="Bacteria"/>
</dbReference>
<dbReference type="HOGENOM" id="CLU_077650_4_0_6"/>
<dbReference type="Proteomes" id="UP000009100">
    <property type="component" value="Chromosome 1"/>
</dbReference>
<dbReference type="GO" id="GO:0005737">
    <property type="term" value="C:cytoplasm"/>
    <property type="evidence" value="ECO:0007669"/>
    <property type="project" value="UniProtKB-SubCell"/>
</dbReference>
<dbReference type="GO" id="GO:0051259">
    <property type="term" value="P:protein complex oligomerization"/>
    <property type="evidence" value="ECO:0007669"/>
    <property type="project" value="InterPro"/>
</dbReference>
<dbReference type="GO" id="GO:0006457">
    <property type="term" value="P:protein folding"/>
    <property type="evidence" value="ECO:0007669"/>
    <property type="project" value="UniProtKB-UniRule"/>
</dbReference>
<dbReference type="Gene3D" id="1.20.120.1820">
    <property type="match status" value="1"/>
</dbReference>
<dbReference type="Gene3D" id="1.20.1280.20">
    <property type="entry name" value="HscB, C-terminal domain"/>
    <property type="match status" value="1"/>
</dbReference>
<dbReference type="HAMAP" id="MF_01150">
    <property type="entry name" value="TorD"/>
    <property type="match status" value="1"/>
</dbReference>
<dbReference type="InterPro" id="IPR023069">
    <property type="entry name" value="Chaperone_TorD"/>
</dbReference>
<dbReference type="InterPro" id="IPR020945">
    <property type="entry name" value="DMSO/NO3_reduct_chaperone"/>
</dbReference>
<dbReference type="InterPro" id="IPR036386">
    <property type="entry name" value="HscB_C_sf"/>
</dbReference>
<dbReference type="InterPro" id="IPR036411">
    <property type="entry name" value="TorD-like_sf"/>
</dbReference>
<dbReference type="InterPro" id="IPR050289">
    <property type="entry name" value="TorD/DmsD_chaperones"/>
</dbReference>
<dbReference type="NCBIfam" id="NF003442">
    <property type="entry name" value="PRK04976.1"/>
    <property type="match status" value="1"/>
</dbReference>
<dbReference type="PANTHER" id="PTHR34227:SF11">
    <property type="entry name" value="CHAPERONE PROTEIN TORD"/>
    <property type="match status" value="1"/>
</dbReference>
<dbReference type="PANTHER" id="PTHR34227">
    <property type="entry name" value="CHAPERONE PROTEIN YCDY"/>
    <property type="match status" value="1"/>
</dbReference>
<dbReference type="Pfam" id="PF02613">
    <property type="entry name" value="Nitrate_red_del"/>
    <property type="match status" value="1"/>
</dbReference>
<dbReference type="SUPFAM" id="SSF89155">
    <property type="entry name" value="TorD-like"/>
    <property type="match status" value="1"/>
</dbReference>
<feature type="chain" id="PRO_1000164173" description="Chaperone protein TorD">
    <location>
        <begin position="1"/>
        <end position="215"/>
    </location>
</feature>
<sequence length="215" mass="24654">MKDTKAFNEQRAEIYWWLSSLFAKELTQEELDHYHSVEIRSFLTGLGENETLKPAIDSLVDALNRLQTREDAQLELSADFCDLFLKTDKHGALPYASMYIGQTGLLNDKPAKDMEEIMAKHNLVVNQDLKEPADHIAIELDFLGNLIIRSNETELEEELEKSFAVQQQFIEQQLLTWVPKFNVKCHDIDTFGFYASVSSLLLAFCKLDTQYLAGE</sequence>
<reference key="1">
    <citation type="submission" date="2009-02" db="EMBL/GenBank/DDBJ databases">
        <title>Vibrio splendidus str. LGP32 complete genome.</title>
        <authorList>
            <person name="Mazel D."/>
            <person name="Le Roux F."/>
        </authorList>
    </citation>
    <scope>NUCLEOTIDE SEQUENCE [LARGE SCALE GENOMIC DNA]</scope>
    <source>
        <strain>LGP32</strain>
    </source>
</reference>
<protein>
    <recommendedName>
        <fullName evidence="1">Chaperone protein TorD</fullName>
    </recommendedName>
</protein>
<keyword id="KW-0143">Chaperone</keyword>
<keyword id="KW-0963">Cytoplasm</keyword>
<evidence type="ECO:0000255" key="1">
    <source>
        <dbReference type="HAMAP-Rule" id="MF_01150"/>
    </source>
</evidence>
<comment type="function">
    <text evidence="1">Involved in the biogenesis of TorA. Acts on TorA before the insertion of the molybdenum cofactor and, as a result, probably favors a conformation of the apoenzyme that is competent for acquiring the cofactor.</text>
</comment>
<comment type="subcellular location">
    <subcellularLocation>
        <location evidence="1">Cytoplasm</location>
    </subcellularLocation>
</comment>
<comment type="similarity">
    <text evidence="1">Belongs to the TorD/DmsD family. TorD subfamily.</text>
</comment>
<organism>
    <name type="scientific">Vibrio atlanticus (strain LGP32)</name>
    <name type="common">Vibrio splendidus (strain Mel32)</name>
    <dbReference type="NCBI Taxonomy" id="575788"/>
    <lineage>
        <taxon>Bacteria</taxon>
        <taxon>Pseudomonadati</taxon>
        <taxon>Pseudomonadota</taxon>
        <taxon>Gammaproteobacteria</taxon>
        <taxon>Vibrionales</taxon>
        <taxon>Vibrionaceae</taxon>
        <taxon>Vibrio</taxon>
    </lineage>
</organism>
<accession>B7VMG5</accession>